<evidence type="ECO:0000255" key="1">
    <source>
        <dbReference type="HAMAP-Rule" id="MF_00074"/>
    </source>
</evidence>
<sequence>MTPEAFAADVPVSRETVERLEAYLAVLEKWQRRINLVGKTTLDDPWRRHFLDSAQLLALLPTPTRVLLDLGSGAGFPGLVLAILGVPEVHLVEADGRKSAFLIEAARITNTRIVLHTLRLEALPVFPVDVVTARAFAPLARILEGAAPFLLAGAQGVFLKGQSVDDELTEAQSQWTMSVERFASRSDPTGHILRIGEIHRA</sequence>
<accession>Q2RN75</accession>
<gene>
    <name evidence="1" type="primary">rsmG</name>
    <name type="ordered locus">Rru_A3626</name>
</gene>
<keyword id="KW-0963">Cytoplasm</keyword>
<keyword id="KW-0489">Methyltransferase</keyword>
<keyword id="KW-1185">Reference proteome</keyword>
<keyword id="KW-0698">rRNA processing</keyword>
<keyword id="KW-0949">S-adenosyl-L-methionine</keyword>
<keyword id="KW-0808">Transferase</keyword>
<comment type="function">
    <text evidence="1">Specifically methylates the N7 position of guanine in position 527 of 16S rRNA.</text>
</comment>
<comment type="catalytic activity">
    <reaction evidence="1">
        <text>guanosine(527) in 16S rRNA + S-adenosyl-L-methionine = N(7)-methylguanosine(527) in 16S rRNA + S-adenosyl-L-homocysteine</text>
        <dbReference type="Rhea" id="RHEA:42732"/>
        <dbReference type="Rhea" id="RHEA-COMP:10209"/>
        <dbReference type="Rhea" id="RHEA-COMP:10210"/>
        <dbReference type="ChEBI" id="CHEBI:57856"/>
        <dbReference type="ChEBI" id="CHEBI:59789"/>
        <dbReference type="ChEBI" id="CHEBI:74269"/>
        <dbReference type="ChEBI" id="CHEBI:74480"/>
        <dbReference type="EC" id="2.1.1.170"/>
    </reaction>
</comment>
<comment type="subcellular location">
    <subcellularLocation>
        <location evidence="1">Cytoplasm</location>
    </subcellularLocation>
</comment>
<comment type="similarity">
    <text evidence="1">Belongs to the methyltransferase superfamily. RNA methyltransferase RsmG family.</text>
</comment>
<organism>
    <name type="scientific">Rhodospirillum rubrum (strain ATCC 11170 / ATH 1.1.1 / DSM 467 / LMG 4362 / NCIMB 8255 / S1)</name>
    <dbReference type="NCBI Taxonomy" id="269796"/>
    <lineage>
        <taxon>Bacteria</taxon>
        <taxon>Pseudomonadati</taxon>
        <taxon>Pseudomonadota</taxon>
        <taxon>Alphaproteobacteria</taxon>
        <taxon>Rhodospirillales</taxon>
        <taxon>Rhodospirillaceae</taxon>
        <taxon>Rhodospirillum</taxon>
    </lineage>
</organism>
<feature type="chain" id="PRO_0000335416" description="Ribosomal RNA small subunit methyltransferase G">
    <location>
        <begin position="1"/>
        <end position="201"/>
    </location>
</feature>
<feature type="binding site" evidence="1">
    <location>
        <position position="71"/>
    </location>
    <ligand>
        <name>S-adenosyl-L-methionine</name>
        <dbReference type="ChEBI" id="CHEBI:59789"/>
    </ligand>
</feature>
<feature type="binding site" evidence="1">
    <location>
        <position position="76"/>
    </location>
    <ligand>
        <name>S-adenosyl-L-methionine</name>
        <dbReference type="ChEBI" id="CHEBI:59789"/>
    </ligand>
</feature>
<feature type="binding site" evidence="1">
    <location>
        <begin position="120"/>
        <end position="121"/>
    </location>
    <ligand>
        <name>S-adenosyl-L-methionine</name>
        <dbReference type="ChEBI" id="CHEBI:59789"/>
    </ligand>
</feature>
<feature type="binding site" evidence="1">
    <location>
        <position position="134"/>
    </location>
    <ligand>
        <name>S-adenosyl-L-methionine</name>
        <dbReference type="ChEBI" id="CHEBI:59789"/>
    </ligand>
</feature>
<protein>
    <recommendedName>
        <fullName evidence="1">Ribosomal RNA small subunit methyltransferase G</fullName>
        <ecNumber evidence="1">2.1.1.170</ecNumber>
    </recommendedName>
    <alternativeName>
        <fullName evidence="1">16S rRNA 7-methylguanosine methyltransferase</fullName>
        <shortName evidence="1">16S rRNA m7G methyltransferase</shortName>
    </alternativeName>
</protein>
<dbReference type="EC" id="2.1.1.170" evidence="1"/>
<dbReference type="EMBL" id="CP000230">
    <property type="protein sequence ID" value="ABC24420.1"/>
    <property type="molecule type" value="Genomic_DNA"/>
</dbReference>
<dbReference type="RefSeq" id="WP_011391373.1">
    <property type="nucleotide sequence ID" value="NC_007643.1"/>
</dbReference>
<dbReference type="RefSeq" id="YP_428707.1">
    <property type="nucleotide sequence ID" value="NC_007643.1"/>
</dbReference>
<dbReference type="SMR" id="Q2RN75"/>
<dbReference type="STRING" id="269796.Rru_A3626"/>
<dbReference type="EnsemblBacteria" id="ABC24420">
    <property type="protein sequence ID" value="ABC24420"/>
    <property type="gene ID" value="Rru_A3626"/>
</dbReference>
<dbReference type="KEGG" id="rru:Rru_A3626"/>
<dbReference type="PATRIC" id="fig|269796.9.peg.3747"/>
<dbReference type="eggNOG" id="COG0357">
    <property type="taxonomic scope" value="Bacteria"/>
</dbReference>
<dbReference type="HOGENOM" id="CLU_065341_1_1_5"/>
<dbReference type="PhylomeDB" id="Q2RN75"/>
<dbReference type="Proteomes" id="UP000001929">
    <property type="component" value="Chromosome"/>
</dbReference>
<dbReference type="GO" id="GO:0005829">
    <property type="term" value="C:cytosol"/>
    <property type="evidence" value="ECO:0007669"/>
    <property type="project" value="TreeGrafter"/>
</dbReference>
<dbReference type="GO" id="GO:0070043">
    <property type="term" value="F:rRNA (guanine-N7-)-methyltransferase activity"/>
    <property type="evidence" value="ECO:0007669"/>
    <property type="project" value="UniProtKB-UniRule"/>
</dbReference>
<dbReference type="Gene3D" id="3.40.50.150">
    <property type="entry name" value="Vaccinia Virus protein VP39"/>
    <property type="match status" value="1"/>
</dbReference>
<dbReference type="HAMAP" id="MF_00074">
    <property type="entry name" value="16SrRNA_methyltr_G"/>
    <property type="match status" value="1"/>
</dbReference>
<dbReference type="InterPro" id="IPR003682">
    <property type="entry name" value="rRNA_ssu_MeTfrase_G"/>
</dbReference>
<dbReference type="InterPro" id="IPR029063">
    <property type="entry name" value="SAM-dependent_MTases_sf"/>
</dbReference>
<dbReference type="NCBIfam" id="TIGR00138">
    <property type="entry name" value="rsmG_gidB"/>
    <property type="match status" value="1"/>
</dbReference>
<dbReference type="PANTHER" id="PTHR31760">
    <property type="entry name" value="S-ADENOSYL-L-METHIONINE-DEPENDENT METHYLTRANSFERASES SUPERFAMILY PROTEIN"/>
    <property type="match status" value="1"/>
</dbReference>
<dbReference type="PANTHER" id="PTHR31760:SF0">
    <property type="entry name" value="S-ADENOSYL-L-METHIONINE-DEPENDENT METHYLTRANSFERASES SUPERFAMILY PROTEIN"/>
    <property type="match status" value="1"/>
</dbReference>
<dbReference type="Pfam" id="PF02527">
    <property type="entry name" value="GidB"/>
    <property type="match status" value="1"/>
</dbReference>
<dbReference type="PIRSF" id="PIRSF003078">
    <property type="entry name" value="GidB"/>
    <property type="match status" value="1"/>
</dbReference>
<dbReference type="SUPFAM" id="SSF53335">
    <property type="entry name" value="S-adenosyl-L-methionine-dependent methyltransferases"/>
    <property type="match status" value="1"/>
</dbReference>
<reference key="1">
    <citation type="journal article" date="2011" name="Stand. Genomic Sci.">
        <title>Complete genome sequence of Rhodospirillum rubrum type strain (S1).</title>
        <authorList>
            <person name="Munk A.C."/>
            <person name="Copeland A."/>
            <person name="Lucas S."/>
            <person name="Lapidus A."/>
            <person name="Del Rio T.G."/>
            <person name="Barry K."/>
            <person name="Detter J.C."/>
            <person name="Hammon N."/>
            <person name="Israni S."/>
            <person name="Pitluck S."/>
            <person name="Brettin T."/>
            <person name="Bruce D."/>
            <person name="Han C."/>
            <person name="Tapia R."/>
            <person name="Gilna P."/>
            <person name="Schmutz J."/>
            <person name="Larimer F."/>
            <person name="Land M."/>
            <person name="Kyrpides N.C."/>
            <person name="Mavromatis K."/>
            <person name="Richardson P."/>
            <person name="Rohde M."/>
            <person name="Goeker M."/>
            <person name="Klenk H.P."/>
            <person name="Zhang Y."/>
            <person name="Roberts G.P."/>
            <person name="Reslewic S."/>
            <person name="Schwartz D.C."/>
        </authorList>
    </citation>
    <scope>NUCLEOTIDE SEQUENCE [LARGE SCALE GENOMIC DNA]</scope>
    <source>
        <strain>ATCC 11170 / ATH 1.1.1 / DSM 467 / LMG 4362 / NCIMB 8255 / S1</strain>
    </source>
</reference>
<name>RSMG_RHORT</name>
<proteinExistence type="inferred from homology"/>